<accession>Q4LCS9</accession>
<organism>
    <name type="scientific">Androctonus australis</name>
    <name type="common">Sahara scorpion</name>
    <dbReference type="NCBI Taxonomy" id="6858"/>
    <lineage>
        <taxon>Eukaryota</taxon>
        <taxon>Metazoa</taxon>
        <taxon>Ecdysozoa</taxon>
        <taxon>Arthropoda</taxon>
        <taxon>Chelicerata</taxon>
        <taxon>Arachnida</taxon>
        <taxon>Scorpiones</taxon>
        <taxon>Buthida</taxon>
        <taxon>Buthoidea</taxon>
        <taxon>Buthidae</taxon>
        <taxon>Androctonus</taxon>
    </lineage>
</organism>
<comment type="function">
    <text evidence="2">Weakly inhibits the vertebrate potassium channel Kv1.1/KCNA1.</text>
</comment>
<comment type="subcellular location">
    <subcellularLocation>
        <location evidence="2">Secreted</location>
    </subcellularLocation>
</comment>
<comment type="tissue specificity">
    <text evidence="2 3">Expressed by the venom gland.</text>
</comment>
<comment type="domain">
    <text evidence="4">Has the structural arrangement of an alpha-helix connected to antiparallel beta-sheets by disulfide bonds (CS-alpha/beta).</text>
</comment>
<comment type="mass spectrometry" mass="6592.5" error="0.19" method="Electrospray" evidence="2"/>
<comment type="miscellaneous">
    <text evidence="5">Negative results: does not inhibit the vertebrate potassium channel Kv1.3/KCNA3. This toxin is a weak beta toxin because it has no effect on Nav1.2a/SCN2A voltage-dependent sodium channels when perfused at a concentration of 100 nM, but when added to the extracellular bath solution at a concentration of 1 uM it shifts the voltage of activation toward more negative potentials. Has no effect on the Nav1.5/SCN5A voltage-dependent sodium channel. Administration to mice produces no toxic effects (PubMed:15656785).</text>
</comment>
<comment type="similarity">
    <text evidence="4">Belongs to the long (3 C-C) scorpion toxin superfamily. Sodium/Potassium channel inhibitor family.</text>
</comment>
<keyword id="KW-0903">Direct protein sequencing</keyword>
<keyword id="KW-1015">Disulfide bond</keyword>
<keyword id="KW-0872">Ion channel impairing toxin</keyword>
<keyword id="KW-0528">Neurotoxin</keyword>
<keyword id="KW-0632">Potassium channel impairing toxin</keyword>
<keyword id="KW-0964">Secreted</keyword>
<keyword id="KW-0732">Signal</keyword>
<keyword id="KW-0800">Toxin</keyword>
<keyword id="KW-1220">Voltage-gated potassium channel impairing toxin</keyword>
<sequence length="80" mass="9045">MMKLMLFSIIVILFSLIGSIHGADVPGNYPLDSSDDTYLCAPLGENPSCIQICRKHGVKYGYCYAFQCWCEYLEDKNVKI</sequence>
<dbReference type="EMBL" id="AJ781833">
    <property type="protein sequence ID" value="CAH03779.1"/>
    <property type="molecule type" value="mRNA"/>
</dbReference>
<dbReference type="SMR" id="Q4LCS9"/>
<dbReference type="GO" id="GO:0005576">
    <property type="term" value="C:extracellular region"/>
    <property type="evidence" value="ECO:0000314"/>
    <property type="project" value="UniProtKB"/>
</dbReference>
<dbReference type="GO" id="GO:0008200">
    <property type="term" value="F:ion channel inhibitor activity"/>
    <property type="evidence" value="ECO:0000314"/>
    <property type="project" value="UniProtKB"/>
</dbReference>
<dbReference type="GO" id="GO:0019870">
    <property type="term" value="F:potassium channel inhibitor activity"/>
    <property type="evidence" value="ECO:0000314"/>
    <property type="project" value="UniProtKB"/>
</dbReference>
<dbReference type="GO" id="GO:0019871">
    <property type="term" value="F:sodium channel inhibitor activity"/>
    <property type="evidence" value="ECO:0000314"/>
    <property type="project" value="UniProtKB"/>
</dbReference>
<dbReference type="GO" id="GO:0090729">
    <property type="term" value="F:toxin activity"/>
    <property type="evidence" value="ECO:0007669"/>
    <property type="project" value="UniProtKB-KW"/>
</dbReference>
<dbReference type="CDD" id="cd23106">
    <property type="entry name" value="neurotoxins_LC_scorpion"/>
    <property type="match status" value="1"/>
</dbReference>
<dbReference type="FunFam" id="3.30.30.10:FF:000008">
    <property type="entry name" value="Toxin-like peptide AaF1CA7"/>
    <property type="match status" value="1"/>
</dbReference>
<dbReference type="Gene3D" id="3.30.30.10">
    <property type="entry name" value="Knottin, scorpion toxin-like"/>
    <property type="match status" value="1"/>
</dbReference>
<dbReference type="InterPro" id="IPR044062">
    <property type="entry name" value="LCN-type_CS_alpha_beta_dom"/>
</dbReference>
<dbReference type="InterPro" id="IPR036574">
    <property type="entry name" value="Scorpion_toxin-like_sf"/>
</dbReference>
<dbReference type="InterPro" id="IPR002061">
    <property type="entry name" value="Scorpion_toxinL/defensin"/>
</dbReference>
<dbReference type="Pfam" id="PF00537">
    <property type="entry name" value="Toxin_3"/>
    <property type="match status" value="1"/>
</dbReference>
<dbReference type="SUPFAM" id="SSF57095">
    <property type="entry name" value="Scorpion toxin-like"/>
    <property type="match status" value="1"/>
</dbReference>
<dbReference type="PROSITE" id="PS51863">
    <property type="entry name" value="LCN_CSAB"/>
    <property type="match status" value="1"/>
</dbReference>
<reference evidence="4 6" key="1">
    <citation type="journal article" date="2005" name="Biochem. Biophys. Res. Commun.">
        <title>New 'birtoxin analogs' from Androctonus australis venom.</title>
        <authorList>
            <person name="Martin-Eauclaire M.-F."/>
            <person name="Ceard B."/>
            <person name="Bosmans F."/>
            <person name="Rosso J.-P."/>
            <person name="Tytgat J."/>
            <person name="Bougis P.E."/>
        </authorList>
    </citation>
    <scope>NUCLEOTIDE SEQUENCE [MRNA]</scope>
    <scope>TISSUE SPECIFICITY</scope>
    <source>
        <tissue evidence="3">Venom gland</tissue>
    </source>
</reference>
<reference evidence="4" key="2">
    <citation type="journal article" date="2005" name="Biochem. J.">
        <title>A new type of scorpion Na+-channel-toxin-like polypeptide active on K+ channels.</title>
        <authorList>
            <person name="Srairi-Abid N."/>
            <person name="Guijarro J.I."/>
            <person name="Benkhalifa R."/>
            <person name="Mantegazza M."/>
            <person name="Cheikh A."/>
            <person name="Ben-Aissa M."/>
            <person name="Haumont P.-Y."/>
            <person name="Delepierre M."/>
            <person name="El Ayeb M."/>
        </authorList>
    </citation>
    <scope>PROTEIN SEQUENCE OF 23-80</scope>
    <scope>FUNCTION</scope>
    <scope>SUBCELLULAR LOCATION</scope>
    <scope>TISSUE SPECIFICITY</scope>
    <scope>MASS SPECTROMETRY</scope>
    <source>
        <tissue evidence="2">Venom</tissue>
    </source>
</reference>
<evidence type="ECO:0000255" key="1">
    <source>
        <dbReference type="PROSITE-ProRule" id="PRU01210"/>
    </source>
</evidence>
<evidence type="ECO:0000269" key="2">
    <source>
    </source>
</evidence>
<evidence type="ECO:0000269" key="3">
    <source>
    </source>
</evidence>
<evidence type="ECO:0000305" key="4"/>
<evidence type="ECO:0000305" key="5">
    <source>
    </source>
</evidence>
<evidence type="ECO:0000312" key="6">
    <source>
        <dbReference type="EMBL" id="CAH03779.1"/>
    </source>
</evidence>
<protein>
    <recommendedName>
        <fullName>Beta-toxin KAaH2</fullName>
    </recommendedName>
    <alternativeName>
        <fullName>Peptide AaF1CA22</fullName>
    </alternativeName>
</protein>
<feature type="signal peptide" evidence="2">
    <location>
        <begin position="1"/>
        <end position="22"/>
    </location>
</feature>
<feature type="chain" id="PRO_0000228820" description="Beta-toxin KAaH2">
    <location>
        <begin position="23"/>
        <end position="80"/>
    </location>
</feature>
<feature type="domain" description="LCN-type CS-alpha/beta" evidence="1">
    <location>
        <begin position="25"/>
        <end position="80"/>
    </location>
</feature>
<feature type="disulfide bond" evidence="1">
    <location>
        <begin position="40"/>
        <end position="63"/>
    </location>
</feature>
<feature type="disulfide bond" evidence="1">
    <location>
        <begin position="49"/>
        <end position="68"/>
    </location>
</feature>
<feature type="disulfide bond" evidence="1">
    <location>
        <begin position="53"/>
        <end position="70"/>
    </location>
</feature>
<proteinExistence type="evidence at protein level"/>
<name>TXA22_ANDAU</name>